<dbReference type="EC" id="2.1.1.33" evidence="2"/>
<dbReference type="EMBL" id="AE015450">
    <property type="protein sequence ID" value="AAP56667.2"/>
    <property type="molecule type" value="Genomic_DNA"/>
</dbReference>
<dbReference type="RefSeq" id="WP_011113558.1">
    <property type="nucleotide sequence ID" value="NC_004829.2"/>
</dbReference>
<dbReference type="SMR" id="Q7NBG2"/>
<dbReference type="GeneID" id="93510148"/>
<dbReference type="KEGG" id="mga:MGA_1194"/>
<dbReference type="PATRIC" id="fig|233150.7.peg.351"/>
<dbReference type="HOGENOM" id="CLU_050910_2_1_14"/>
<dbReference type="OrthoDB" id="9802090at2"/>
<dbReference type="UniPathway" id="UPA00989"/>
<dbReference type="Proteomes" id="UP000001418">
    <property type="component" value="Chromosome"/>
</dbReference>
<dbReference type="GO" id="GO:0043527">
    <property type="term" value="C:tRNA methyltransferase complex"/>
    <property type="evidence" value="ECO:0007669"/>
    <property type="project" value="TreeGrafter"/>
</dbReference>
<dbReference type="GO" id="GO:0008176">
    <property type="term" value="F:tRNA (guanine(46)-N7)-methyltransferase activity"/>
    <property type="evidence" value="ECO:0007669"/>
    <property type="project" value="UniProtKB-UniRule"/>
</dbReference>
<dbReference type="CDD" id="cd02440">
    <property type="entry name" value="AdoMet_MTases"/>
    <property type="match status" value="1"/>
</dbReference>
<dbReference type="Gene3D" id="3.40.50.150">
    <property type="entry name" value="Vaccinia Virus protein VP39"/>
    <property type="match status" value="1"/>
</dbReference>
<dbReference type="HAMAP" id="MF_01057">
    <property type="entry name" value="tRNA_methyltr_TrmB"/>
    <property type="match status" value="1"/>
</dbReference>
<dbReference type="InterPro" id="IPR029063">
    <property type="entry name" value="SAM-dependent_MTases_sf"/>
</dbReference>
<dbReference type="InterPro" id="IPR003358">
    <property type="entry name" value="tRNA_(Gua-N-7)_MeTrfase_Trmb"/>
</dbReference>
<dbReference type="InterPro" id="IPR055361">
    <property type="entry name" value="tRNA_methyltr_TrmB_bact"/>
</dbReference>
<dbReference type="NCBIfam" id="NF001080">
    <property type="entry name" value="PRK00121.2-2"/>
    <property type="match status" value="1"/>
</dbReference>
<dbReference type="NCBIfam" id="TIGR00091">
    <property type="entry name" value="tRNA (guanosine(46)-N7)-methyltransferase TrmB"/>
    <property type="match status" value="1"/>
</dbReference>
<dbReference type="PANTHER" id="PTHR23417">
    <property type="entry name" value="3-DEOXY-D-MANNO-OCTULOSONIC-ACID TRANSFERASE/TRNA GUANINE-N 7 - -METHYLTRANSFERASE"/>
    <property type="match status" value="1"/>
</dbReference>
<dbReference type="PANTHER" id="PTHR23417:SF14">
    <property type="entry name" value="PENTACOTRIPEPTIDE-REPEAT REGION OF PRORP DOMAIN-CONTAINING PROTEIN"/>
    <property type="match status" value="1"/>
</dbReference>
<dbReference type="Pfam" id="PF02390">
    <property type="entry name" value="Methyltransf_4"/>
    <property type="match status" value="1"/>
</dbReference>
<dbReference type="SUPFAM" id="SSF53335">
    <property type="entry name" value="S-adenosyl-L-methionine-dependent methyltransferases"/>
    <property type="match status" value="1"/>
</dbReference>
<dbReference type="PROSITE" id="PS51625">
    <property type="entry name" value="SAM_MT_TRMB"/>
    <property type="match status" value="1"/>
</dbReference>
<reference key="1">
    <citation type="journal article" date="2003" name="Microbiology">
        <title>The complete genome sequence of the avian pathogen Mycoplasma gallisepticum strain R(low).</title>
        <authorList>
            <person name="Papazisi L."/>
            <person name="Gorton T.S."/>
            <person name="Kutish G."/>
            <person name="Markham P.F."/>
            <person name="Browning G.F."/>
            <person name="Nguyen D.K."/>
            <person name="Swartzell S."/>
            <person name="Madan A."/>
            <person name="Mahairas G."/>
            <person name="Geary S.J."/>
        </authorList>
    </citation>
    <scope>NUCLEOTIDE SEQUENCE [LARGE SCALE GENOMIC DNA]</scope>
    <source>
        <strain>R(low / passage 15 / clone 2)</strain>
    </source>
</reference>
<comment type="function">
    <text evidence="2">Catalyzes the formation of N(7)-methylguanine at position 46 (m7G46) in tRNA.</text>
</comment>
<comment type="catalytic activity">
    <reaction evidence="2">
        <text>guanosine(46) in tRNA + S-adenosyl-L-methionine = N(7)-methylguanosine(46) in tRNA + S-adenosyl-L-homocysteine</text>
        <dbReference type="Rhea" id="RHEA:42708"/>
        <dbReference type="Rhea" id="RHEA-COMP:10188"/>
        <dbReference type="Rhea" id="RHEA-COMP:10189"/>
        <dbReference type="ChEBI" id="CHEBI:57856"/>
        <dbReference type="ChEBI" id="CHEBI:59789"/>
        <dbReference type="ChEBI" id="CHEBI:74269"/>
        <dbReference type="ChEBI" id="CHEBI:74480"/>
        <dbReference type="EC" id="2.1.1.33"/>
    </reaction>
</comment>
<comment type="pathway">
    <text evidence="2">tRNA modification; N(7)-methylguanine-tRNA biosynthesis.</text>
</comment>
<comment type="similarity">
    <text evidence="2">Belongs to the class I-like SAM-binding methyltransferase superfamily. TrmB family.</text>
</comment>
<protein>
    <recommendedName>
        <fullName evidence="2">tRNA (guanine-N(7)-)-methyltransferase</fullName>
        <ecNumber evidence="2">2.1.1.33</ecNumber>
    </recommendedName>
    <alternativeName>
        <fullName evidence="2">tRNA (guanine(46)-N(7))-methyltransferase</fullName>
    </alternativeName>
    <alternativeName>
        <fullName evidence="2">tRNA(m7G46)-methyltransferase</fullName>
    </alternativeName>
</protein>
<proteinExistence type="inferred from homology"/>
<name>TRMB_MYCGA</name>
<gene>
    <name evidence="2" type="primary">trmB</name>
    <name type="ordered locus">MYCGA3170</name>
    <name type="ORF">MGA_1194</name>
</gene>
<sequence length="213" mass="24748">MRIRNIRDAHLKINKAKNIIGVDNLKTKLDPKKFNALEIGSGKGGFIYQKAITNPGINYFGIEKNATVILKMINKSELLEQLTNLFIVHDDFALIDHEFPNACFDQIYLNFSDPWPKKRHAKKRLVDLAFLNKYQRILKADGIIEFKTDNDQLFNYAIEMINSLEQIKIIAYTNDLHSLDSSDALLKNNVITEYEQRFINLKKNINKIVFKFI</sequence>
<accession>Q7NBG2</accession>
<feature type="chain" id="PRO_0000171350" description="tRNA (guanine-N(7)-)-methyltransferase">
    <location>
        <begin position="1"/>
        <end position="213"/>
    </location>
</feature>
<feature type="active site" evidence="1">
    <location>
        <position position="113"/>
    </location>
</feature>
<feature type="binding site" evidence="2">
    <location>
        <position position="38"/>
    </location>
    <ligand>
        <name>S-adenosyl-L-methionine</name>
        <dbReference type="ChEBI" id="CHEBI:59789"/>
    </ligand>
</feature>
<feature type="binding site" evidence="2">
    <location>
        <position position="63"/>
    </location>
    <ligand>
        <name>S-adenosyl-L-methionine</name>
        <dbReference type="ChEBI" id="CHEBI:59789"/>
    </ligand>
</feature>
<feature type="binding site" evidence="2">
    <location>
        <position position="91"/>
    </location>
    <ligand>
        <name>S-adenosyl-L-methionine</name>
        <dbReference type="ChEBI" id="CHEBI:59789"/>
    </ligand>
</feature>
<feature type="binding site" evidence="2">
    <location>
        <position position="113"/>
    </location>
    <ligand>
        <name>S-adenosyl-L-methionine</name>
        <dbReference type="ChEBI" id="CHEBI:59789"/>
    </ligand>
</feature>
<feature type="binding site" evidence="2">
    <location>
        <position position="117"/>
    </location>
    <ligand>
        <name>substrate</name>
    </ligand>
</feature>
<feature type="binding site" evidence="2">
    <location>
        <position position="149"/>
    </location>
    <ligand>
        <name>substrate</name>
    </ligand>
</feature>
<feature type="binding site" evidence="2">
    <location>
        <begin position="192"/>
        <end position="195"/>
    </location>
    <ligand>
        <name>substrate</name>
    </ligand>
</feature>
<organism>
    <name type="scientific">Mycoplasmoides gallisepticum (strain R(low / passage 15 / clone 2))</name>
    <name type="common">Mycoplasma gallisepticum</name>
    <dbReference type="NCBI Taxonomy" id="710127"/>
    <lineage>
        <taxon>Bacteria</taxon>
        <taxon>Bacillati</taxon>
        <taxon>Mycoplasmatota</taxon>
        <taxon>Mycoplasmoidales</taxon>
        <taxon>Mycoplasmoidaceae</taxon>
        <taxon>Mycoplasmoides</taxon>
    </lineage>
</organism>
<evidence type="ECO:0000250" key="1"/>
<evidence type="ECO:0000255" key="2">
    <source>
        <dbReference type="HAMAP-Rule" id="MF_01057"/>
    </source>
</evidence>
<keyword id="KW-0489">Methyltransferase</keyword>
<keyword id="KW-1185">Reference proteome</keyword>
<keyword id="KW-0949">S-adenosyl-L-methionine</keyword>
<keyword id="KW-0808">Transferase</keyword>
<keyword id="KW-0819">tRNA processing</keyword>